<protein>
    <recommendedName>
        <fullName>Protein translocase subunit SecF</fullName>
    </recommendedName>
</protein>
<keyword id="KW-0997">Cell inner membrane</keyword>
<keyword id="KW-1003">Cell membrane</keyword>
<keyword id="KW-0472">Membrane</keyword>
<keyword id="KW-0653">Protein transport</keyword>
<keyword id="KW-1185">Reference proteome</keyword>
<keyword id="KW-0811">Translocation</keyword>
<keyword id="KW-0812">Transmembrane</keyword>
<keyword id="KW-1133">Transmembrane helix</keyword>
<keyword id="KW-0813">Transport</keyword>
<organism>
    <name type="scientific">Helicobacter pylori (strain ATCC 700392 / 26695)</name>
    <name type="common">Campylobacter pylori</name>
    <dbReference type="NCBI Taxonomy" id="85962"/>
    <lineage>
        <taxon>Bacteria</taxon>
        <taxon>Pseudomonadati</taxon>
        <taxon>Campylobacterota</taxon>
        <taxon>Epsilonproteobacteria</taxon>
        <taxon>Campylobacterales</taxon>
        <taxon>Helicobacteraceae</taxon>
        <taxon>Helicobacter</taxon>
    </lineage>
</organism>
<name>SECF_HELPY</name>
<sequence length="323" mass="36277">MELFKRTRILSFMRYSNYGVIVSAILALLALGLLFFKGFSLGIDFAGGSLVQVRYTQNAPIKEVRDLFEKEARFKGVQVSEFGSKEEILIKFPFVETAENEDLNAIVANILKPSGDFEIRKFDTVGPRVGSELKEKGILSLILALIAIMVYVSFRYEWRFALASVIALVHDVILVASSVIVFKIDMNLEVIAALLTLIGYSINDTIIIFDRIREEMLSQKTKNATQAIDEAISSTLTRTLLTSLTVFFVVLILCVFGSKIIIGFSLPMLIGTIVGTYSSIFIAPKVALLLGFDMDKYYENETRKIKKAQEKEKMRRLYESGQV</sequence>
<gene>
    <name evidence="1" type="primary">secF</name>
    <name type="ordered locus">HP_1549</name>
</gene>
<reference key="1">
    <citation type="journal article" date="1997" name="Nature">
        <title>The complete genome sequence of the gastric pathogen Helicobacter pylori.</title>
        <authorList>
            <person name="Tomb J.-F."/>
            <person name="White O."/>
            <person name="Kerlavage A.R."/>
            <person name="Clayton R.A."/>
            <person name="Sutton G.G."/>
            <person name="Fleischmann R.D."/>
            <person name="Ketchum K.A."/>
            <person name="Klenk H.-P."/>
            <person name="Gill S.R."/>
            <person name="Dougherty B.A."/>
            <person name="Nelson K.E."/>
            <person name="Quackenbush J."/>
            <person name="Zhou L."/>
            <person name="Kirkness E.F."/>
            <person name="Peterson S.N."/>
            <person name="Loftus B.J."/>
            <person name="Richardson D.L."/>
            <person name="Dodson R.J."/>
            <person name="Khalak H.G."/>
            <person name="Glodek A."/>
            <person name="McKenney K."/>
            <person name="FitzGerald L.M."/>
            <person name="Lee N."/>
            <person name="Adams M.D."/>
            <person name="Hickey E.K."/>
            <person name="Berg D.E."/>
            <person name="Gocayne J.D."/>
            <person name="Utterback T.R."/>
            <person name="Peterson J.D."/>
            <person name="Kelley J.M."/>
            <person name="Cotton M.D."/>
            <person name="Weidman J.F."/>
            <person name="Fujii C."/>
            <person name="Bowman C."/>
            <person name="Watthey L."/>
            <person name="Wallin E."/>
            <person name="Hayes W.S."/>
            <person name="Borodovsky M."/>
            <person name="Karp P.D."/>
            <person name="Smith H.O."/>
            <person name="Fraser C.M."/>
            <person name="Venter J.C."/>
        </authorList>
    </citation>
    <scope>NUCLEOTIDE SEQUENCE [LARGE SCALE GENOMIC DNA]</scope>
    <source>
        <strain>ATCC 700392 / 26695</strain>
    </source>
</reference>
<proteinExistence type="inferred from homology"/>
<dbReference type="EMBL" id="AE000511">
    <property type="protein sequence ID" value="AAD08587.1"/>
    <property type="molecule type" value="Genomic_DNA"/>
</dbReference>
<dbReference type="PIR" id="E64713">
    <property type="entry name" value="E64713"/>
</dbReference>
<dbReference type="RefSeq" id="NP_208340.1">
    <property type="nucleotide sequence ID" value="NC_000915.1"/>
</dbReference>
<dbReference type="RefSeq" id="WP_000418663.1">
    <property type="nucleotide sequence ID" value="NC_018939.1"/>
</dbReference>
<dbReference type="SMR" id="O26073"/>
<dbReference type="FunCoup" id="O26073">
    <property type="interactions" value="168"/>
</dbReference>
<dbReference type="STRING" id="85962.HP_1549"/>
<dbReference type="PaxDb" id="85962-C694_08025"/>
<dbReference type="EnsemblBacteria" id="AAD08587">
    <property type="protein sequence ID" value="AAD08587"/>
    <property type="gene ID" value="HP_1549"/>
</dbReference>
<dbReference type="KEGG" id="heo:C694_08025"/>
<dbReference type="KEGG" id="hpy:HP_1549"/>
<dbReference type="PATRIC" id="fig|85962.47.peg.1664"/>
<dbReference type="eggNOG" id="COG0341">
    <property type="taxonomic scope" value="Bacteria"/>
</dbReference>
<dbReference type="InParanoid" id="O26073"/>
<dbReference type="OrthoDB" id="9774769at2"/>
<dbReference type="PhylomeDB" id="O26073"/>
<dbReference type="Proteomes" id="UP000000429">
    <property type="component" value="Chromosome"/>
</dbReference>
<dbReference type="GO" id="GO:0005886">
    <property type="term" value="C:plasma membrane"/>
    <property type="evidence" value="ECO:0000318"/>
    <property type="project" value="GO_Central"/>
</dbReference>
<dbReference type="GO" id="GO:0015450">
    <property type="term" value="F:protein-transporting ATPase activity"/>
    <property type="evidence" value="ECO:0007669"/>
    <property type="project" value="InterPro"/>
</dbReference>
<dbReference type="GO" id="GO:0065002">
    <property type="term" value="P:intracellular protein transmembrane transport"/>
    <property type="evidence" value="ECO:0007669"/>
    <property type="project" value="UniProtKB-UniRule"/>
</dbReference>
<dbReference type="GO" id="GO:0006605">
    <property type="term" value="P:protein targeting"/>
    <property type="evidence" value="ECO:0007669"/>
    <property type="project" value="UniProtKB-UniRule"/>
</dbReference>
<dbReference type="GO" id="GO:0015031">
    <property type="term" value="P:protein transport"/>
    <property type="evidence" value="ECO:0000318"/>
    <property type="project" value="GO_Central"/>
</dbReference>
<dbReference type="GO" id="GO:0043952">
    <property type="term" value="P:protein transport by the Sec complex"/>
    <property type="evidence" value="ECO:0007669"/>
    <property type="project" value="UniProtKB-UniRule"/>
</dbReference>
<dbReference type="Gene3D" id="1.20.1640.10">
    <property type="entry name" value="Multidrug efflux transporter AcrB transmembrane domain"/>
    <property type="match status" value="1"/>
</dbReference>
<dbReference type="HAMAP" id="MF_01464_B">
    <property type="entry name" value="SecF_B"/>
    <property type="match status" value="1"/>
</dbReference>
<dbReference type="InterPro" id="IPR022813">
    <property type="entry name" value="SecD/SecF_arch_bac"/>
</dbReference>
<dbReference type="InterPro" id="IPR022645">
    <property type="entry name" value="SecD/SecF_bac"/>
</dbReference>
<dbReference type="InterPro" id="IPR022646">
    <property type="entry name" value="SecD/SecF_CS"/>
</dbReference>
<dbReference type="InterPro" id="IPR048634">
    <property type="entry name" value="SecD_SecF_C"/>
</dbReference>
<dbReference type="InterPro" id="IPR055344">
    <property type="entry name" value="SecD_SecF_C_bact"/>
</dbReference>
<dbReference type="InterPro" id="IPR005665">
    <property type="entry name" value="SecF_bac"/>
</dbReference>
<dbReference type="NCBIfam" id="TIGR00916">
    <property type="entry name" value="2A0604s01"/>
    <property type="match status" value="1"/>
</dbReference>
<dbReference type="NCBIfam" id="TIGR00966">
    <property type="entry name" value="transloc_SecF"/>
    <property type="match status" value="1"/>
</dbReference>
<dbReference type="PANTHER" id="PTHR30081:SF8">
    <property type="entry name" value="PROTEIN TRANSLOCASE SUBUNIT SECF"/>
    <property type="match status" value="1"/>
</dbReference>
<dbReference type="PANTHER" id="PTHR30081">
    <property type="entry name" value="PROTEIN-EXPORT MEMBRANE PROTEIN SEC"/>
    <property type="match status" value="1"/>
</dbReference>
<dbReference type="Pfam" id="PF07549">
    <property type="entry name" value="Sec_GG"/>
    <property type="match status" value="1"/>
</dbReference>
<dbReference type="Pfam" id="PF02355">
    <property type="entry name" value="SecD_SecF_C"/>
    <property type="match status" value="1"/>
</dbReference>
<dbReference type="PRINTS" id="PR01755">
    <property type="entry name" value="SECFTRNLCASE"/>
</dbReference>
<dbReference type="SUPFAM" id="SSF82866">
    <property type="entry name" value="Multidrug efflux transporter AcrB transmembrane domain"/>
    <property type="match status" value="1"/>
</dbReference>
<evidence type="ECO:0000255" key="1">
    <source>
        <dbReference type="HAMAP-Rule" id="MF_01464"/>
    </source>
</evidence>
<feature type="chain" id="PRO_0000095980" description="Protein translocase subunit SecF">
    <location>
        <begin position="1"/>
        <end position="323"/>
    </location>
</feature>
<feature type="transmembrane region" description="Helical" evidence="1">
    <location>
        <begin position="19"/>
        <end position="39"/>
    </location>
</feature>
<feature type="transmembrane region" description="Helical" evidence="1">
    <location>
        <begin position="138"/>
        <end position="158"/>
    </location>
</feature>
<feature type="transmembrane region" description="Helical" evidence="1">
    <location>
        <begin position="162"/>
        <end position="182"/>
    </location>
</feature>
<feature type="transmembrane region" description="Helical" evidence="1">
    <location>
        <begin position="189"/>
        <end position="209"/>
    </location>
</feature>
<feature type="transmembrane region" description="Helical" evidence="1">
    <location>
        <begin position="244"/>
        <end position="264"/>
    </location>
</feature>
<feature type="transmembrane region" description="Helical" evidence="1">
    <location>
        <begin position="269"/>
        <end position="289"/>
    </location>
</feature>
<comment type="function">
    <text evidence="1">Part of the Sec protein translocase complex. Interacts with the SecYEG preprotein conducting channel. SecDF uses the proton motive force (PMF) to complete protein translocation after the ATP-dependent function of SecA.</text>
</comment>
<comment type="subunit">
    <text evidence="1">Forms a complex with SecD. Part of the essential Sec protein translocation apparatus which comprises SecA, SecYEG and auxiliary proteins SecDF-YajC and YidC.</text>
</comment>
<comment type="subcellular location">
    <subcellularLocation>
        <location evidence="1">Cell inner membrane</location>
        <topology evidence="1">Multi-pass membrane protein</topology>
    </subcellularLocation>
</comment>
<comment type="similarity">
    <text evidence="1">Belongs to the SecD/SecF family. SecF subfamily.</text>
</comment>
<accession>O26073</accession>